<organism>
    <name type="scientific">Staphylococcus aureus (strain Mu3 / ATCC 700698)</name>
    <dbReference type="NCBI Taxonomy" id="418127"/>
    <lineage>
        <taxon>Bacteria</taxon>
        <taxon>Bacillati</taxon>
        <taxon>Bacillota</taxon>
        <taxon>Bacilli</taxon>
        <taxon>Bacillales</taxon>
        <taxon>Staphylococcaceae</taxon>
        <taxon>Staphylococcus</taxon>
    </lineage>
</organism>
<comment type="function">
    <text evidence="1">Catalyzes the transfer of an acetyl group from acetyl-CoA to tetrahydrodipicolinate.</text>
</comment>
<comment type="catalytic activity">
    <reaction evidence="1">
        <text>(S)-2,3,4,5-tetrahydrodipicolinate + acetyl-CoA + H2O = L-2-acetamido-6-oxoheptanedioate + CoA</text>
        <dbReference type="Rhea" id="RHEA:13085"/>
        <dbReference type="ChEBI" id="CHEBI:15377"/>
        <dbReference type="ChEBI" id="CHEBI:16845"/>
        <dbReference type="ChEBI" id="CHEBI:57287"/>
        <dbReference type="ChEBI" id="CHEBI:57288"/>
        <dbReference type="ChEBI" id="CHEBI:58117"/>
        <dbReference type="EC" id="2.3.1.89"/>
    </reaction>
</comment>
<comment type="pathway">
    <text evidence="1">Amino-acid biosynthesis; L-lysine biosynthesis via DAP pathway; LL-2,6-diaminopimelate from (S)-tetrahydrodipicolinate (acetylase route): step 1/3.</text>
</comment>
<comment type="similarity">
    <text evidence="1">Belongs to the transferase hexapeptide repeat family. DapH subfamily.</text>
</comment>
<protein>
    <recommendedName>
        <fullName evidence="1">2,3,4,5-tetrahydropyridine-2,6-dicarboxylate N-acetyltransferase</fullName>
        <ecNumber evidence="1">2.3.1.89</ecNumber>
    </recommendedName>
    <alternativeName>
        <fullName evidence="1">Tetrahydrodipicolinate N-acetyltransferase</fullName>
        <shortName evidence="1">THP acetyltransferase</shortName>
        <shortName evidence="1">Tetrahydropicolinate acetylase</shortName>
    </alternativeName>
</protein>
<accession>A7X274</accession>
<evidence type="ECO:0000255" key="1">
    <source>
        <dbReference type="HAMAP-Rule" id="MF_01691"/>
    </source>
</evidence>
<proteinExistence type="inferred from homology"/>
<dbReference type="EC" id="2.3.1.89" evidence="1"/>
<dbReference type="EMBL" id="AP009324">
    <property type="protein sequence ID" value="BAF78268.1"/>
    <property type="molecule type" value="Genomic_DNA"/>
</dbReference>
<dbReference type="SMR" id="A7X274"/>
<dbReference type="KEGG" id="saw:SAHV_1385"/>
<dbReference type="HOGENOM" id="CLU_103751_0_0_9"/>
<dbReference type="UniPathway" id="UPA00034">
    <property type="reaction ID" value="UER00022"/>
</dbReference>
<dbReference type="GO" id="GO:0047200">
    <property type="term" value="F:tetrahydrodipicolinate N-acetyltransferase activity"/>
    <property type="evidence" value="ECO:0007669"/>
    <property type="project" value="UniProtKB-EC"/>
</dbReference>
<dbReference type="GO" id="GO:0019877">
    <property type="term" value="P:diaminopimelate biosynthetic process"/>
    <property type="evidence" value="ECO:0007669"/>
    <property type="project" value="UniProtKB-UniRule"/>
</dbReference>
<dbReference type="GO" id="GO:0009089">
    <property type="term" value="P:lysine biosynthetic process via diaminopimelate"/>
    <property type="evidence" value="ECO:0007669"/>
    <property type="project" value="UniProtKB-UniRule"/>
</dbReference>
<dbReference type="CDD" id="cd03350">
    <property type="entry name" value="LbH_THP_succinylT"/>
    <property type="match status" value="1"/>
</dbReference>
<dbReference type="Gene3D" id="2.160.10.10">
    <property type="entry name" value="Hexapeptide repeat proteins"/>
    <property type="match status" value="1"/>
</dbReference>
<dbReference type="Gene3D" id="3.30.70.250">
    <property type="entry name" value="Malonyl-CoA ACP transacylase, ACP-binding"/>
    <property type="match status" value="1"/>
</dbReference>
<dbReference type="HAMAP" id="MF_01691">
    <property type="entry name" value="DapH"/>
    <property type="match status" value="1"/>
</dbReference>
<dbReference type="InterPro" id="IPR019873">
    <property type="entry name" value="DapH"/>
</dbReference>
<dbReference type="InterPro" id="IPR013710">
    <property type="entry name" value="DapH_N"/>
</dbReference>
<dbReference type="InterPro" id="IPR001451">
    <property type="entry name" value="Hexapep"/>
</dbReference>
<dbReference type="InterPro" id="IPR018357">
    <property type="entry name" value="Hexapep_transf_CS"/>
</dbReference>
<dbReference type="InterPro" id="IPR050179">
    <property type="entry name" value="Trans_hexapeptide_repeat"/>
</dbReference>
<dbReference type="InterPro" id="IPR011004">
    <property type="entry name" value="Trimer_LpxA-like_sf"/>
</dbReference>
<dbReference type="NCBIfam" id="TIGR03532">
    <property type="entry name" value="DapD_Ac"/>
    <property type="match status" value="1"/>
</dbReference>
<dbReference type="PANTHER" id="PTHR43300:SF10">
    <property type="entry name" value="2,3,4,5-TETRAHYDROPYRIDINE-2,6-DICARBOXYLATE N-ACETYLTRANSFERASE"/>
    <property type="match status" value="1"/>
</dbReference>
<dbReference type="PANTHER" id="PTHR43300">
    <property type="entry name" value="ACETYLTRANSFERASE"/>
    <property type="match status" value="1"/>
</dbReference>
<dbReference type="Pfam" id="PF08503">
    <property type="entry name" value="DapH_N"/>
    <property type="match status" value="1"/>
</dbReference>
<dbReference type="Pfam" id="PF00132">
    <property type="entry name" value="Hexapep"/>
    <property type="match status" value="1"/>
</dbReference>
<dbReference type="Pfam" id="PF14602">
    <property type="entry name" value="Hexapep_2"/>
    <property type="match status" value="1"/>
</dbReference>
<dbReference type="SUPFAM" id="SSF51161">
    <property type="entry name" value="Trimeric LpxA-like enzymes"/>
    <property type="match status" value="1"/>
</dbReference>
<dbReference type="PROSITE" id="PS00101">
    <property type="entry name" value="HEXAPEP_TRANSFERASES"/>
    <property type="match status" value="1"/>
</dbReference>
<gene>
    <name evidence="1" type="primary">dapH</name>
    <name type="ordered locus">SAHV_1385</name>
</gene>
<name>DAPH_STAA1</name>
<sequence>MVQHLTAEEIIQYISDAKKSTPIKVYLNGNFEGITYPESFKVFGSEQSKVIFCEADDWKPFYEAYGSQFEDIEIEMDRRNSAIPLKDLTNTNARIEPGAFIREQAIIEDGAVVMMGATINIGAVVGEGTMIDMNATLGGRATTGKNVHVGAGAVLAGVIEPPSASPVIIEDDVLIGANAVILEGVRVGKGAIVAAGAIVTQDVPAGAVVAGTPAKVIKQASEVQDTKKEIVAALRKLND</sequence>
<keyword id="KW-0012">Acyltransferase</keyword>
<keyword id="KW-0028">Amino-acid biosynthesis</keyword>
<keyword id="KW-0220">Diaminopimelate biosynthesis</keyword>
<keyword id="KW-0457">Lysine biosynthesis</keyword>
<keyword id="KW-0677">Repeat</keyword>
<keyword id="KW-0808">Transferase</keyword>
<feature type="chain" id="PRO_0000376693" description="2,3,4,5-tetrahydropyridine-2,6-dicarboxylate N-acetyltransferase">
    <location>
        <begin position="1"/>
        <end position="239"/>
    </location>
</feature>
<reference key="1">
    <citation type="journal article" date="2008" name="Antimicrob. Agents Chemother.">
        <title>Mutated response regulator graR is responsible for phenotypic conversion of Staphylococcus aureus from heterogeneous vancomycin-intermediate resistance to vancomycin-intermediate resistance.</title>
        <authorList>
            <person name="Neoh H.-M."/>
            <person name="Cui L."/>
            <person name="Yuzawa H."/>
            <person name="Takeuchi F."/>
            <person name="Matsuo M."/>
            <person name="Hiramatsu K."/>
        </authorList>
    </citation>
    <scope>NUCLEOTIDE SEQUENCE [LARGE SCALE GENOMIC DNA]</scope>
    <source>
        <strain>Mu3 / ATCC 700698</strain>
    </source>
</reference>